<reference key="1">
    <citation type="journal article" date="2008" name="J. Bacteriol.">
        <title>Comparative genome sequence analysis of multidrug-resistant Acinetobacter baumannii.</title>
        <authorList>
            <person name="Adams M.D."/>
            <person name="Goglin K."/>
            <person name="Molyneaux N."/>
            <person name="Hujer K.M."/>
            <person name="Lavender H."/>
            <person name="Jamison J.J."/>
            <person name="MacDonald I.J."/>
            <person name="Martin K.M."/>
            <person name="Russo T."/>
            <person name="Campagnari A.A."/>
            <person name="Hujer A.M."/>
            <person name="Bonomo R.A."/>
            <person name="Gill S.R."/>
        </authorList>
    </citation>
    <scope>NUCLEOTIDE SEQUENCE [LARGE SCALE GENOMIC DNA]</scope>
    <source>
        <strain>AB307-0294</strain>
    </source>
</reference>
<protein>
    <recommendedName>
        <fullName evidence="1">6,7-dimethyl-8-ribityllumazine synthase</fullName>
        <shortName evidence="1">DMRL synthase</shortName>
        <shortName evidence="1">LS</shortName>
        <shortName evidence="1">Lumazine synthase</shortName>
        <ecNumber evidence="1">2.5.1.78</ecNumber>
    </recommendedName>
</protein>
<organism>
    <name type="scientific">Acinetobacter baumannii (strain AB307-0294)</name>
    <dbReference type="NCBI Taxonomy" id="557600"/>
    <lineage>
        <taxon>Bacteria</taxon>
        <taxon>Pseudomonadati</taxon>
        <taxon>Pseudomonadota</taxon>
        <taxon>Gammaproteobacteria</taxon>
        <taxon>Moraxellales</taxon>
        <taxon>Moraxellaceae</taxon>
        <taxon>Acinetobacter</taxon>
        <taxon>Acinetobacter calcoaceticus/baumannii complex</taxon>
    </lineage>
</organism>
<proteinExistence type="inferred from homology"/>
<dbReference type="EC" id="2.5.1.78" evidence="1"/>
<dbReference type="EMBL" id="CP001172">
    <property type="protein sequence ID" value="ACJ59094.1"/>
    <property type="molecule type" value="Genomic_DNA"/>
</dbReference>
<dbReference type="SMR" id="B7GUW3"/>
<dbReference type="HOGENOM" id="CLU_089358_1_1_6"/>
<dbReference type="UniPathway" id="UPA00275">
    <property type="reaction ID" value="UER00404"/>
</dbReference>
<dbReference type="Proteomes" id="UP000006924">
    <property type="component" value="Chromosome"/>
</dbReference>
<dbReference type="GO" id="GO:0005829">
    <property type="term" value="C:cytosol"/>
    <property type="evidence" value="ECO:0007669"/>
    <property type="project" value="TreeGrafter"/>
</dbReference>
<dbReference type="GO" id="GO:0009349">
    <property type="term" value="C:riboflavin synthase complex"/>
    <property type="evidence" value="ECO:0007669"/>
    <property type="project" value="InterPro"/>
</dbReference>
<dbReference type="GO" id="GO:0000906">
    <property type="term" value="F:6,7-dimethyl-8-ribityllumazine synthase activity"/>
    <property type="evidence" value="ECO:0007669"/>
    <property type="project" value="UniProtKB-UniRule"/>
</dbReference>
<dbReference type="GO" id="GO:0009231">
    <property type="term" value="P:riboflavin biosynthetic process"/>
    <property type="evidence" value="ECO:0007669"/>
    <property type="project" value="UniProtKB-UniRule"/>
</dbReference>
<dbReference type="CDD" id="cd09209">
    <property type="entry name" value="Lumazine_synthase-I"/>
    <property type="match status" value="1"/>
</dbReference>
<dbReference type="FunFam" id="3.40.50.960:FF:000001">
    <property type="entry name" value="6,7-dimethyl-8-ribityllumazine synthase"/>
    <property type="match status" value="1"/>
</dbReference>
<dbReference type="Gene3D" id="3.40.50.960">
    <property type="entry name" value="Lumazine/riboflavin synthase"/>
    <property type="match status" value="1"/>
</dbReference>
<dbReference type="HAMAP" id="MF_00178">
    <property type="entry name" value="Lumazine_synth"/>
    <property type="match status" value="1"/>
</dbReference>
<dbReference type="InterPro" id="IPR034964">
    <property type="entry name" value="LS"/>
</dbReference>
<dbReference type="InterPro" id="IPR002180">
    <property type="entry name" value="LS/RS"/>
</dbReference>
<dbReference type="InterPro" id="IPR036467">
    <property type="entry name" value="LS/RS_sf"/>
</dbReference>
<dbReference type="NCBIfam" id="TIGR00114">
    <property type="entry name" value="lumazine-synth"/>
    <property type="match status" value="1"/>
</dbReference>
<dbReference type="NCBIfam" id="NF000812">
    <property type="entry name" value="PRK00061.1-4"/>
    <property type="match status" value="1"/>
</dbReference>
<dbReference type="PANTHER" id="PTHR21058:SF0">
    <property type="entry name" value="6,7-DIMETHYL-8-RIBITYLLUMAZINE SYNTHASE"/>
    <property type="match status" value="1"/>
</dbReference>
<dbReference type="PANTHER" id="PTHR21058">
    <property type="entry name" value="6,7-DIMETHYL-8-RIBITYLLUMAZINE SYNTHASE DMRL SYNTHASE LUMAZINE SYNTHASE"/>
    <property type="match status" value="1"/>
</dbReference>
<dbReference type="Pfam" id="PF00885">
    <property type="entry name" value="DMRL_synthase"/>
    <property type="match status" value="1"/>
</dbReference>
<dbReference type="SUPFAM" id="SSF52121">
    <property type="entry name" value="Lumazine synthase"/>
    <property type="match status" value="1"/>
</dbReference>
<feature type="chain" id="PRO_1000195450" description="6,7-dimethyl-8-ribityllumazine synthase">
    <location>
        <begin position="1"/>
        <end position="156"/>
    </location>
</feature>
<feature type="active site" description="Proton donor" evidence="1">
    <location>
        <position position="91"/>
    </location>
</feature>
<feature type="binding site" evidence="1">
    <location>
        <position position="25"/>
    </location>
    <ligand>
        <name>5-amino-6-(D-ribitylamino)uracil</name>
        <dbReference type="ChEBI" id="CHEBI:15934"/>
    </ligand>
</feature>
<feature type="binding site" evidence="1">
    <location>
        <begin position="59"/>
        <end position="61"/>
    </location>
    <ligand>
        <name>5-amino-6-(D-ribitylamino)uracil</name>
        <dbReference type="ChEBI" id="CHEBI:15934"/>
    </ligand>
</feature>
<feature type="binding site" evidence="1">
    <location>
        <begin position="83"/>
        <end position="85"/>
    </location>
    <ligand>
        <name>5-amino-6-(D-ribitylamino)uracil</name>
        <dbReference type="ChEBI" id="CHEBI:15934"/>
    </ligand>
</feature>
<feature type="binding site" evidence="1">
    <location>
        <begin position="88"/>
        <end position="89"/>
    </location>
    <ligand>
        <name>(2S)-2-hydroxy-3-oxobutyl phosphate</name>
        <dbReference type="ChEBI" id="CHEBI:58830"/>
    </ligand>
</feature>
<feature type="binding site" evidence="1">
    <location>
        <position position="116"/>
    </location>
    <ligand>
        <name>5-amino-6-(D-ribitylamino)uracil</name>
        <dbReference type="ChEBI" id="CHEBI:15934"/>
    </ligand>
</feature>
<feature type="binding site" evidence="1">
    <location>
        <position position="130"/>
    </location>
    <ligand>
        <name>(2S)-2-hydroxy-3-oxobutyl phosphate</name>
        <dbReference type="ChEBI" id="CHEBI:58830"/>
    </ligand>
</feature>
<comment type="function">
    <text evidence="1">Catalyzes the formation of 6,7-dimethyl-8-ribityllumazine by condensation of 5-amino-6-(D-ribitylamino)uracil with 3,4-dihydroxy-2-butanone 4-phosphate. This is the penultimate step in the biosynthesis of riboflavin.</text>
</comment>
<comment type="catalytic activity">
    <reaction evidence="1">
        <text>(2S)-2-hydroxy-3-oxobutyl phosphate + 5-amino-6-(D-ribitylamino)uracil = 6,7-dimethyl-8-(1-D-ribityl)lumazine + phosphate + 2 H2O + H(+)</text>
        <dbReference type="Rhea" id="RHEA:26152"/>
        <dbReference type="ChEBI" id="CHEBI:15377"/>
        <dbReference type="ChEBI" id="CHEBI:15378"/>
        <dbReference type="ChEBI" id="CHEBI:15934"/>
        <dbReference type="ChEBI" id="CHEBI:43474"/>
        <dbReference type="ChEBI" id="CHEBI:58201"/>
        <dbReference type="ChEBI" id="CHEBI:58830"/>
        <dbReference type="EC" id="2.5.1.78"/>
    </reaction>
</comment>
<comment type="pathway">
    <text evidence="1">Cofactor biosynthesis; riboflavin biosynthesis; riboflavin from 2-hydroxy-3-oxobutyl phosphate and 5-amino-6-(D-ribitylamino)uracil: step 1/2.</text>
</comment>
<comment type="subunit">
    <text evidence="1">Forms an icosahedral capsid composed of 60 subunits, arranged as a dodecamer of pentamers.</text>
</comment>
<comment type="similarity">
    <text evidence="1">Belongs to the DMRL synthase family.</text>
</comment>
<keyword id="KW-0686">Riboflavin biosynthesis</keyword>
<keyword id="KW-0808">Transferase</keyword>
<gene>
    <name evidence="1" type="primary">ribH</name>
    <name type="ordered locus">ABBFA_000094</name>
</gene>
<accession>B7GUW3</accession>
<name>RISB_ACIB3</name>
<evidence type="ECO:0000255" key="1">
    <source>
        <dbReference type="HAMAP-Rule" id="MF_00178"/>
    </source>
</evidence>
<sequence length="156" mass="16493">MAIRRIEGLLHLASEGRYAILVGRFNSFVVEHLLEGAIDTLKRHGVNEDNITVIHAPGAWELPIVAKKLATSNQFDAIIALGAVIRGSTPHFDFVAGECAKGLGVVALESSLPVINGVLTTDSIEQAIERSGTKAGNKGSEAALTAIEMVNLLKAI</sequence>